<organism>
    <name type="scientific">Yersinia pestis (strain Pestoides F)</name>
    <dbReference type="NCBI Taxonomy" id="386656"/>
    <lineage>
        <taxon>Bacteria</taxon>
        <taxon>Pseudomonadati</taxon>
        <taxon>Pseudomonadota</taxon>
        <taxon>Gammaproteobacteria</taxon>
        <taxon>Enterobacterales</taxon>
        <taxon>Yersiniaceae</taxon>
        <taxon>Yersinia</taxon>
    </lineage>
</organism>
<gene>
    <name evidence="1" type="primary">rpsQ</name>
    <name type="ordered locus">YPDSF_0142</name>
</gene>
<proteinExistence type="inferred from homology"/>
<protein>
    <recommendedName>
        <fullName evidence="1">Small ribosomal subunit protein uS17</fullName>
    </recommendedName>
    <alternativeName>
        <fullName evidence="2">30S ribosomal protein S17</fullName>
    </alternativeName>
</protein>
<keyword id="KW-0687">Ribonucleoprotein</keyword>
<keyword id="KW-0689">Ribosomal protein</keyword>
<keyword id="KW-0694">RNA-binding</keyword>
<keyword id="KW-0699">rRNA-binding</keyword>
<sequence>MTDQIRTLQGRVVSDKMEKSMVVAIERVVKHPIYGKFIRRTTKLHVHDENNECGIGDVVEIRECRPLSKTKSWTLVRVVEKAIL</sequence>
<comment type="function">
    <text evidence="1">One of the primary rRNA binding proteins, it binds specifically to the 5'-end of 16S ribosomal RNA.</text>
</comment>
<comment type="subunit">
    <text evidence="1">Part of the 30S ribosomal subunit.</text>
</comment>
<comment type="similarity">
    <text evidence="1">Belongs to the universal ribosomal protein uS17 family.</text>
</comment>
<accession>A4TH01</accession>
<reference key="1">
    <citation type="submission" date="2007-02" db="EMBL/GenBank/DDBJ databases">
        <title>Complete sequence of chromosome of Yersinia pestis Pestoides F.</title>
        <authorList>
            <consortium name="US DOE Joint Genome Institute"/>
            <person name="Copeland A."/>
            <person name="Lucas S."/>
            <person name="Lapidus A."/>
            <person name="Barry K."/>
            <person name="Detter J.C."/>
            <person name="Glavina del Rio T."/>
            <person name="Hammon N."/>
            <person name="Israni S."/>
            <person name="Dalin E."/>
            <person name="Tice H."/>
            <person name="Pitluck S."/>
            <person name="Di Bartolo G."/>
            <person name="Chain P."/>
            <person name="Malfatti S."/>
            <person name="Shin M."/>
            <person name="Vergez L."/>
            <person name="Schmutz J."/>
            <person name="Larimer F."/>
            <person name="Land M."/>
            <person name="Hauser L."/>
            <person name="Worsham P."/>
            <person name="Chu M."/>
            <person name="Bearden S."/>
            <person name="Garcia E."/>
            <person name="Richardson P."/>
        </authorList>
    </citation>
    <scope>NUCLEOTIDE SEQUENCE [LARGE SCALE GENOMIC DNA]</scope>
    <source>
        <strain>Pestoides F</strain>
    </source>
</reference>
<name>RS17_YERPP</name>
<dbReference type="EMBL" id="CP000668">
    <property type="protein sequence ID" value="ABP38564.1"/>
    <property type="molecule type" value="Genomic_DNA"/>
</dbReference>
<dbReference type="RefSeq" id="WP_002228135.1">
    <property type="nucleotide sequence ID" value="NZ_CP009715.1"/>
</dbReference>
<dbReference type="SMR" id="A4TH01"/>
<dbReference type="GeneID" id="97454240"/>
<dbReference type="KEGG" id="ypp:YPDSF_0142"/>
<dbReference type="PATRIC" id="fig|386656.14.peg.425"/>
<dbReference type="GO" id="GO:0022627">
    <property type="term" value="C:cytosolic small ribosomal subunit"/>
    <property type="evidence" value="ECO:0007669"/>
    <property type="project" value="TreeGrafter"/>
</dbReference>
<dbReference type="GO" id="GO:0019843">
    <property type="term" value="F:rRNA binding"/>
    <property type="evidence" value="ECO:0007669"/>
    <property type="project" value="UniProtKB-UniRule"/>
</dbReference>
<dbReference type="GO" id="GO:0003735">
    <property type="term" value="F:structural constituent of ribosome"/>
    <property type="evidence" value="ECO:0007669"/>
    <property type="project" value="InterPro"/>
</dbReference>
<dbReference type="GO" id="GO:0006412">
    <property type="term" value="P:translation"/>
    <property type="evidence" value="ECO:0007669"/>
    <property type="project" value="UniProtKB-UniRule"/>
</dbReference>
<dbReference type="CDD" id="cd00364">
    <property type="entry name" value="Ribosomal_uS17"/>
    <property type="match status" value="1"/>
</dbReference>
<dbReference type="FunFam" id="2.40.50.140:FF:000014">
    <property type="entry name" value="30S ribosomal protein S17"/>
    <property type="match status" value="1"/>
</dbReference>
<dbReference type="Gene3D" id="2.40.50.140">
    <property type="entry name" value="Nucleic acid-binding proteins"/>
    <property type="match status" value="1"/>
</dbReference>
<dbReference type="HAMAP" id="MF_01345_B">
    <property type="entry name" value="Ribosomal_uS17_B"/>
    <property type="match status" value="1"/>
</dbReference>
<dbReference type="InterPro" id="IPR012340">
    <property type="entry name" value="NA-bd_OB-fold"/>
</dbReference>
<dbReference type="InterPro" id="IPR000266">
    <property type="entry name" value="Ribosomal_uS17"/>
</dbReference>
<dbReference type="InterPro" id="IPR019984">
    <property type="entry name" value="Ribosomal_uS17_bact/chlr"/>
</dbReference>
<dbReference type="InterPro" id="IPR019979">
    <property type="entry name" value="Ribosomal_uS17_CS"/>
</dbReference>
<dbReference type="NCBIfam" id="NF004123">
    <property type="entry name" value="PRK05610.1"/>
    <property type="match status" value="1"/>
</dbReference>
<dbReference type="NCBIfam" id="TIGR03635">
    <property type="entry name" value="uS17_bact"/>
    <property type="match status" value="1"/>
</dbReference>
<dbReference type="PANTHER" id="PTHR10744">
    <property type="entry name" value="40S RIBOSOMAL PROTEIN S11 FAMILY MEMBER"/>
    <property type="match status" value="1"/>
</dbReference>
<dbReference type="PANTHER" id="PTHR10744:SF1">
    <property type="entry name" value="SMALL RIBOSOMAL SUBUNIT PROTEIN US17M"/>
    <property type="match status" value="1"/>
</dbReference>
<dbReference type="Pfam" id="PF00366">
    <property type="entry name" value="Ribosomal_S17"/>
    <property type="match status" value="1"/>
</dbReference>
<dbReference type="PRINTS" id="PR00973">
    <property type="entry name" value="RIBOSOMALS17"/>
</dbReference>
<dbReference type="SUPFAM" id="SSF50249">
    <property type="entry name" value="Nucleic acid-binding proteins"/>
    <property type="match status" value="1"/>
</dbReference>
<dbReference type="PROSITE" id="PS00056">
    <property type="entry name" value="RIBOSOMAL_S17"/>
    <property type="match status" value="1"/>
</dbReference>
<feature type="chain" id="PRO_1000055049" description="Small ribosomal subunit protein uS17">
    <location>
        <begin position="1"/>
        <end position="84"/>
    </location>
</feature>
<evidence type="ECO:0000255" key="1">
    <source>
        <dbReference type="HAMAP-Rule" id="MF_01345"/>
    </source>
</evidence>
<evidence type="ECO:0000305" key="2"/>